<reference key="1">
    <citation type="journal article" date="2004" name="Nat. Biotechnol.">
        <title>Complete sequence and comparative genome analysis of the dairy bacterium Streptococcus thermophilus.</title>
        <authorList>
            <person name="Bolotin A."/>
            <person name="Quinquis B."/>
            <person name="Renault P."/>
            <person name="Sorokin A."/>
            <person name="Ehrlich S.D."/>
            <person name="Kulakauskas S."/>
            <person name="Lapidus A."/>
            <person name="Goltsman E."/>
            <person name="Mazur M."/>
            <person name="Pusch G.D."/>
            <person name="Fonstein M."/>
            <person name="Overbeek R."/>
            <person name="Kyprides N."/>
            <person name="Purnelle B."/>
            <person name="Prozzi D."/>
            <person name="Ngui K."/>
            <person name="Masuy D."/>
            <person name="Hancy F."/>
            <person name="Burteau S."/>
            <person name="Boutry M."/>
            <person name="Delcour J."/>
            <person name="Goffeau A."/>
            <person name="Hols P."/>
        </authorList>
    </citation>
    <scope>NUCLEOTIDE SEQUENCE [LARGE SCALE GENOMIC DNA]</scope>
    <source>
        <strain>CNRZ 1066</strain>
    </source>
</reference>
<accession>Q5LZU9</accession>
<proteinExistence type="inferred from homology"/>
<comment type="similarity">
    <text evidence="1">Belongs to the UPF0223 family.</text>
</comment>
<name>Y998_STRT1</name>
<gene>
    <name type="ordered locus">str0998</name>
</gene>
<sequence length="93" mass="10414">MTKGNYSYPLDPSWSTEEITTVLHFLSQVEKAYESKVDRDQLLEAYKAFKTVVPGKASEKQLDKAFQEASGFSTYQAVRAAKAKEKGFVTLGK</sequence>
<feature type="chain" id="PRO_1000064152" description="UPF0223 protein str0998">
    <location>
        <begin position="1"/>
        <end position="93"/>
    </location>
</feature>
<protein>
    <recommendedName>
        <fullName evidence="1">UPF0223 protein str0998</fullName>
    </recommendedName>
</protein>
<evidence type="ECO:0000255" key="1">
    <source>
        <dbReference type="HAMAP-Rule" id="MF_01041"/>
    </source>
</evidence>
<dbReference type="EMBL" id="CP000024">
    <property type="protein sequence ID" value="AAV62576.1"/>
    <property type="molecule type" value="Genomic_DNA"/>
</dbReference>
<dbReference type="RefSeq" id="WP_002943735.1">
    <property type="nucleotide sequence ID" value="NC_006449.1"/>
</dbReference>
<dbReference type="SMR" id="Q5LZU9"/>
<dbReference type="KEGG" id="stc:str0998"/>
<dbReference type="HOGENOM" id="CLU_166693_0_0_9"/>
<dbReference type="Gene3D" id="1.10.220.80">
    <property type="entry name" value="BH2638-like"/>
    <property type="match status" value="1"/>
</dbReference>
<dbReference type="HAMAP" id="MF_01041">
    <property type="entry name" value="UPF0223"/>
    <property type="match status" value="1"/>
</dbReference>
<dbReference type="InterPro" id="IPR023324">
    <property type="entry name" value="BH2638-like_sf"/>
</dbReference>
<dbReference type="InterPro" id="IPR007920">
    <property type="entry name" value="UPF0223"/>
</dbReference>
<dbReference type="NCBIfam" id="NF003353">
    <property type="entry name" value="PRK04387.1"/>
    <property type="match status" value="1"/>
</dbReference>
<dbReference type="Pfam" id="PF05256">
    <property type="entry name" value="UPF0223"/>
    <property type="match status" value="1"/>
</dbReference>
<dbReference type="PIRSF" id="PIRSF037260">
    <property type="entry name" value="UPF0223"/>
    <property type="match status" value="1"/>
</dbReference>
<dbReference type="SUPFAM" id="SSF158504">
    <property type="entry name" value="BH2638-like"/>
    <property type="match status" value="1"/>
</dbReference>
<organism>
    <name type="scientific">Streptococcus thermophilus (strain CNRZ 1066)</name>
    <dbReference type="NCBI Taxonomy" id="299768"/>
    <lineage>
        <taxon>Bacteria</taxon>
        <taxon>Bacillati</taxon>
        <taxon>Bacillota</taxon>
        <taxon>Bacilli</taxon>
        <taxon>Lactobacillales</taxon>
        <taxon>Streptococcaceae</taxon>
        <taxon>Streptococcus</taxon>
    </lineage>
</organism>